<proteinExistence type="inferred from homology"/>
<organism>
    <name type="scientific">Saccharomyces cerevisiae (strain RM11-1a)</name>
    <name type="common">Baker's yeast</name>
    <dbReference type="NCBI Taxonomy" id="285006"/>
    <lineage>
        <taxon>Eukaryota</taxon>
        <taxon>Fungi</taxon>
        <taxon>Dikarya</taxon>
        <taxon>Ascomycota</taxon>
        <taxon>Saccharomycotina</taxon>
        <taxon>Saccharomycetes</taxon>
        <taxon>Saccharomycetales</taxon>
        <taxon>Saccharomycetaceae</taxon>
        <taxon>Saccharomyces</taxon>
    </lineage>
</organism>
<name>UBP4_YEAS1</name>
<comment type="function">
    <text evidence="1">Ubiquitin thioesterase that acts at the late endosome/prevacuolar compartment to recover ubiquitin from ubiquitinated membrane proteins en route to the vacuole. Also removes ubiquitin from soluble proteins targeted to proteasomes. Is essential to maintain a normal level of free ubiquitin. Involved in the ammonium-induced down-regulation of the GAP1 permease and the UME3 destruction in response to oxidative stress. Has a role in the RAD9 checkpoint response to TOP1 poisons. Required for promoting coordination of DNA replication and avoids DNA overreplication (By similarity).</text>
</comment>
<comment type="catalytic activity">
    <reaction>
        <text>Thiol-dependent hydrolysis of ester, thioester, amide, peptide and isopeptide bonds formed by the C-terminal Gly of ubiquitin (a 76-residue protein attached to proteins as an intracellular targeting signal).</text>
        <dbReference type="EC" id="3.4.19.12"/>
    </reaction>
</comment>
<comment type="activity regulation">
    <text evidence="1">RFU1 is an inhibitor of deubiquitination activity.</text>
</comment>
<comment type="subunit">
    <text evidence="1">Interacts with BRO1, RFU1 and VPS32. Associates with the 26S proteasome (By similarity).</text>
</comment>
<comment type="subcellular location">
    <subcellularLocation>
        <location evidence="1">Cytoplasm</location>
    </subcellularLocation>
    <subcellularLocation>
        <location evidence="1">Late endosome membrane</location>
        <topology evidence="1">Peripheral membrane protein</topology>
    </subcellularLocation>
    <text evidence="1">Recruited to the late endosome by BRO1.</text>
</comment>
<comment type="domain">
    <text evidence="1">Residues 1-208 are essential for the localization to the late endosome and constitute a late endosome localization (LEL) domain.</text>
</comment>
<comment type="similarity">
    <text evidence="6">Belongs to the peptidase C19 family.</text>
</comment>
<reference key="1">
    <citation type="submission" date="2005-03" db="EMBL/GenBank/DDBJ databases">
        <title>Annotation of the Saccharomyces cerevisiae RM11-1a genome.</title>
        <authorList>
            <consortium name="The Broad Institute Genome Sequencing Platform"/>
            <person name="Birren B.W."/>
            <person name="Lander E.S."/>
            <person name="Galagan J.E."/>
            <person name="Nusbaum C."/>
            <person name="Devon K."/>
            <person name="Cuomo C."/>
            <person name="Jaffe D.B."/>
            <person name="Butler J."/>
            <person name="Alvarez P."/>
            <person name="Gnerre S."/>
            <person name="Grabherr M."/>
            <person name="Kleber M."/>
            <person name="Mauceli E.W."/>
            <person name="Brockman W."/>
            <person name="MacCallum I.A."/>
            <person name="Rounsley S."/>
            <person name="Young S.K."/>
            <person name="LaButti K."/>
            <person name="Pushparaj V."/>
            <person name="DeCaprio D."/>
            <person name="Crawford M."/>
            <person name="Koehrsen M."/>
            <person name="Engels R."/>
            <person name="Montgomery P."/>
            <person name="Pearson M."/>
            <person name="Howarth C."/>
            <person name="Larson L."/>
            <person name="Luoma S."/>
            <person name="White J."/>
            <person name="O'Leary S."/>
            <person name="Kodira C.D."/>
            <person name="Zeng Q."/>
            <person name="Yandava C."/>
            <person name="Alvarado L."/>
            <person name="Pratt S."/>
            <person name="Kruglyak L."/>
        </authorList>
    </citation>
    <scope>NUCLEOTIDE SEQUENCE [LARGE SCALE GENOMIC DNA]</scope>
    <source>
        <strain>RM11-1a</strain>
    </source>
</reference>
<gene>
    <name type="primary">DOA4</name>
    <name type="synonym">DOS1</name>
    <name type="synonym">MUT4</name>
    <name type="synonym">NPI2</name>
    <name type="synonym">SSV7</name>
    <name type="synonym">UBP4</name>
    <name type="ORF">SCRG_00446</name>
</gene>
<dbReference type="EC" id="3.4.19.12"/>
<dbReference type="EMBL" id="CH408043">
    <property type="protein sequence ID" value="EDV08230.1"/>
    <property type="molecule type" value="Genomic_DNA"/>
</dbReference>
<dbReference type="SMR" id="B3LGK1"/>
<dbReference type="TopDownProteomics" id="B3LGK1"/>
<dbReference type="HOGENOM" id="CLU_005922_1_0_1"/>
<dbReference type="OrthoDB" id="13727at4893"/>
<dbReference type="Proteomes" id="UP000008335">
    <property type="component" value="Unassembled WGS sequence"/>
</dbReference>
<dbReference type="GO" id="GO:0031902">
    <property type="term" value="C:late endosome membrane"/>
    <property type="evidence" value="ECO:0007669"/>
    <property type="project" value="UniProtKB-SubCell"/>
</dbReference>
<dbReference type="GO" id="GO:0004843">
    <property type="term" value="F:cysteine-type deubiquitinase activity"/>
    <property type="evidence" value="ECO:0007669"/>
    <property type="project" value="UniProtKB-EC"/>
</dbReference>
<dbReference type="GO" id="GO:0016579">
    <property type="term" value="P:protein deubiquitination"/>
    <property type="evidence" value="ECO:0007669"/>
    <property type="project" value="InterPro"/>
</dbReference>
<dbReference type="GO" id="GO:0006508">
    <property type="term" value="P:proteolysis"/>
    <property type="evidence" value="ECO:0007669"/>
    <property type="project" value="UniProtKB-KW"/>
</dbReference>
<dbReference type="CDD" id="cd02674">
    <property type="entry name" value="Peptidase_C19R"/>
    <property type="match status" value="1"/>
</dbReference>
<dbReference type="FunFam" id="3.90.70.10:FF:000115">
    <property type="entry name" value="DOA4p Ubiquitin hydrolase"/>
    <property type="match status" value="1"/>
</dbReference>
<dbReference type="Gene3D" id="3.90.70.10">
    <property type="entry name" value="Cysteine proteinases"/>
    <property type="match status" value="1"/>
</dbReference>
<dbReference type="Gene3D" id="3.40.250.10">
    <property type="entry name" value="Rhodanese-like domain"/>
    <property type="match status" value="1"/>
</dbReference>
<dbReference type="InterPro" id="IPR038765">
    <property type="entry name" value="Papain-like_cys_pep_sf"/>
</dbReference>
<dbReference type="InterPro" id="IPR001394">
    <property type="entry name" value="Peptidase_C19_UCH"/>
</dbReference>
<dbReference type="InterPro" id="IPR001763">
    <property type="entry name" value="Rhodanese-like_dom"/>
</dbReference>
<dbReference type="InterPro" id="IPR036873">
    <property type="entry name" value="Rhodanese-like_dom_sf"/>
</dbReference>
<dbReference type="InterPro" id="IPR050185">
    <property type="entry name" value="Ub_carboxyl-term_hydrolase"/>
</dbReference>
<dbReference type="InterPro" id="IPR018200">
    <property type="entry name" value="USP_CS"/>
</dbReference>
<dbReference type="InterPro" id="IPR028889">
    <property type="entry name" value="USP_dom"/>
</dbReference>
<dbReference type="PANTHER" id="PTHR21646">
    <property type="entry name" value="UBIQUITIN CARBOXYL-TERMINAL HYDROLASE"/>
    <property type="match status" value="1"/>
</dbReference>
<dbReference type="PANTHER" id="PTHR21646:SF95">
    <property type="entry name" value="UBIQUITIN CARBOXYL-TERMINAL HYDROLASE 4-RELATED"/>
    <property type="match status" value="1"/>
</dbReference>
<dbReference type="Pfam" id="PF00581">
    <property type="entry name" value="Rhodanese"/>
    <property type="match status" value="1"/>
</dbReference>
<dbReference type="Pfam" id="PF00443">
    <property type="entry name" value="UCH"/>
    <property type="match status" value="1"/>
</dbReference>
<dbReference type="SMART" id="SM00450">
    <property type="entry name" value="RHOD"/>
    <property type="match status" value="1"/>
</dbReference>
<dbReference type="SUPFAM" id="SSF54001">
    <property type="entry name" value="Cysteine proteinases"/>
    <property type="match status" value="1"/>
</dbReference>
<dbReference type="SUPFAM" id="SSF52821">
    <property type="entry name" value="Rhodanese/Cell cycle control phosphatase"/>
    <property type="match status" value="1"/>
</dbReference>
<dbReference type="PROSITE" id="PS50206">
    <property type="entry name" value="RHODANESE_3"/>
    <property type="match status" value="1"/>
</dbReference>
<dbReference type="PROSITE" id="PS00972">
    <property type="entry name" value="USP_1"/>
    <property type="match status" value="1"/>
</dbReference>
<dbReference type="PROSITE" id="PS00973">
    <property type="entry name" value="USP_2"/>
    <property type="match status" value="1"/>
</dbReference>
<dbReference type="PROSITE" id="PS50235">
    <property type="entry name" value="USP_3"/>
    <property type="match status" value="1"/>
</dbReference>
<sequence>MEQNIISTIRDECIRHRSKYLTIAQLTAIAEAKINEFIITGKAKDQDLSSLLDKCIDILSIYKKNSKDIKNIISCKNKGAMISSNSVMIIQLNYVYYKVIHIIVTTNIPHLSEFAKIKLHKSTSDEGNGNNNNNEFQLMNIYNTLLETLLKDENIAKIKSFIKSSIKQTKLNHEQEECNLMRTGSYITSNQLNSLISSSANSASSQMEILLIDIRSRLEFNKSHIDTKNIICLEPISFKMSYSDHDLEKKSLITSPNSEIKMFQSRNLFKFIILYTDANEYNVKQQSVLLDILVNHSFEKPISDDFTKIFILESGFPGWLKSNYGRQVSSSFPSNNNIKDDSVYINGNTSGLSLQHLPKMSPSIRHSMDDSMKEMLVAPTPLNHLQQQQQQQSDNDHVLKRSSSFKKLFSNYTSPNPKNSNSNLYSISSLSISSSPSPLPLHSPDPVKGNSLPINYPETPHLWKNSETDFMTNQREQLNHNSFAHVAPINTKAITSPSRTATPKLQRFPQTISMNLNMNSNGHSSATSTIQPSCLSLSNNDSLDHTDVTPTSSHNYDLDFAVGLENLGNSCYMNCIIQCILGTHELTQIFLDDSYAKHININSKLGSKGILAKYFARLVHMMYKEQVDGSKKIPISPIKFKLACGSVNSLFKTASQQDCQEFCQFLLDGLHEDLNQCGSNPPLKELSQEAEARREKLSLRIASSIEWERFLTTDFSVIVDLFQGQYASRLKCKVCSHTSTTYQPFTVLSIPIPKKNSRNNITIEDCFREFTKCENLEVDEQWLCPHCEKRQPSTKQLTITRLPRNLIVHLKRFDNLLNKNNDFVIYPFLLDLTPFWANDFDGVFPPGVNDDELPIRGQIPPFKYELYGVACHFGTLYGGHYTAYVKKGLKKGWLYFDDTKYKPVKNKADAINSNAYVLFYHRVYGV</sequence>
<accession>B3LGK1</accession>
<evidence type="ECO:0000250" key="1"/>
<evidence type="ECO:0000250" key="2">
    <source>
        <dbReference type="UniProtKB" id="P32571"/>
    </source>
</evidence>
<evidence type="ECO:0000255" key="3">
    <source>
        <dbReference type="PROSITE-ProRule" id="PRU00173"/>
    </source>
</evidence>
<evidence type="ECO:0000255" key="4">
    <source>
        <dbReference type="PROSITE-ProRule" id="PRU10092"/>
    </source>
</evidence>
<evidence type="ECO:0000255" key="5">
    <source>
        <dbReference type="PROSITE-ProRule" id="PRU10093"/>
    </source>
</evidence>
<evidence type="ECO:0000305" key="6"/>
<protein>
    <recommendedName>
        <fullName>Ubiquitin carboxyl-terminal hydrolase 4</fullName>
        <ecNumber>3.4.19.12</ecNumber>
    </recommendedName>
    <alternativeName>
        <fullName>Deubiquitinating enzyme 4</fullName>
    </alternativeName>
    <alternativeName>
        <fullName>Ubiquitin thioesterase 4</fullName>
    </alternativeName>
    <alternativeName>
        <fullName>Ubiquitin-specific-processing protease 4</fullName>
    </alternativeName>
    <alternativeName>
        <fullName>Vacuole biogenesis protein SSV7</fullName>
    </alternativeName>
</protein>
<keyword id="KW-0963">Cytoplasm</keyword>
<keyword id="KW-0967">Endosome</keyword>
<keyword id="KW-0378">Hydrolase</keyword>
<keyword id="KW-0472">Membrane</keyword>
<keyword id="KW-0597">Phosphoprotein</keyword>
<keyword id="KW-0645">Protease</keyword>
<keyword id="KW-0788">Thiol protease</keyword>
<keyword id="KW-0833">Ubl conjugation pathway</keyword>
<feature type="chain" id="PRO_0000376822" description="Ubiquitin carboxyl-terminal hydrolase 4">
    <location>
        <begin position="1"/>
        <end position="926"/>
    </location>
</feature>
<feature type="domain" description="Rhodanese" evidence="3">
    <location>
        <begin position="205"/>
        <end position="328"/>
    </location>
</feature>
<feature type="domain" description="USP">
    <location>
        <begin position="562"/>
        <end position="923"/>
    </location>
</feature>
<feature type="active site" description="Nucleophile" evidence="4 5">
    <location>
        <position position="571"/>
    </location>
</feature>
<feature type="active site" description="Proton acceptor" evidence="4 5">
    <location>
        <position position="880"/>
    </location>
</feature>
<feature type="modified residue" description="Phosphoserine" evidence="2">
    <location>
        <position position="443"/>
    </location>
</feature>